<reference key="1">
    <citation type="journal article" date="2017" name="Sci. Rep.">
        <title>The tarantula toxin beta/delta-TRTX-Pre1a highlights the importance of the S1-S2 voltage-sensor region for sodium channel subtype selectivity.</title>
        <authorList>
            <person name="Wingerd J.S."/>
            <person name="Mozar C.A."/>
            <person name="Ussing C.A."/>
            <person name="Murali S.S."/>
            <person name="Chin Y.K."/>
            <person name="Cristofori-Armstrong B."/>
            <person name="Durek T."/>
            <person name="Gilchrist J."/>
            <person name="Vaughan C.W."/>
            <person name="Bosmans F."/>
            <person name="Adams D.J."/>
            <person name="Lewis R.J."/>
            <person name="Alewood P.F."/>
            <person name="Mobli M."/>
            <person name="Christie M.J."/>
            <person name="Rash L.D."/>
        </authorList>
    </citation>
    <scope>PROTEIN SEQUENCE</scope>
    <scope>FUNCTION</scope>
    <scope>SUBCELLULAR LOCATION</scope>
    <scope>SYNTHESIS</scope>
    <scope>MASS SPECTROMETRY</scope>
    <scope>DISULFIDE BONDS</scope>
    <scope>3D-STRUCTURE MODELING</scope>
    <source>
        <tissue>Venom</tissue>
    </source>
</reference>
<reference evidence="6 7" key="2">
    <citation type="submission" date="2016-02" db="PDB data bank">
        <title>Resonance assignments and NMR structure determination of tarantula toxin, mu-TRTX-Pre1a.</title>
        <authorList>
            <person name="Chin Y.K.-Y."/>
            <person name="Wingerd J.S."/>
            <person name="Mobli M."/>
            <person name="Rash L.D."/>
        </authorList>
    </citation>
    <scope>STRUCTURE BY NMR OF MUTANTS ALA-6 AND ALA-7</scope>
</reference>
<accession>A0A1S4NYE8</accession>
<accession>A0A218K9X1</accession>
<name>NTA_PSARE</name>
<protein>
    <recommendedName>
        <fullName evidence="2">Beta/delta-theraphotoxin-Pre1a</fullName>
        <shortName evidence="2">Beta/delta-TRTX-Pre1a</shortName>
    </recommendedName>
</protein>
<keyword id="KW-0002">3D-structure</keyword>
<keyword id="KW-0903">Direct protein sequencing</keyword>
<keyword id="KW-1015">Disulfide bond</keyword>
<keyword id="KW-0872">Ion channel impairing toxin</keyword>
<keyword id="KW-0960">Knottin</keyword>
<keyword id="KW-0528">Neurotoxin</keyword>
<keyword id="KW-0964">Secreted</keyword>
<keyword id="KW-0800">Toxin</keyword>
<keyword id="KW-0738">Voltage-gated sodium channel impairing toxin</keyword>
<evidence type="ECO:0000269" key="1">
    <source>
    </source>
</evidence>
<evidence type="ECO:0000303" key="2">
    <source>
    </source>
</evidence>
<evidence type="ECO:0000305" key="3"/>
<evidence type="ECO:0000305" key="4">
    <source>
    </source>
</evidence>
<evidence type="ECO:0000305" key="5">
    <source ref="2"/>
</evidence>
<evidence type="ECO:0000312" key="6">
    <source>
        <dbReference type="PDB" id="5I1X"/>
    </source>
</evidence>
<evidence type="ECO:0000312" key="7">
    <source>
        <dbReference type="PDB" id="5I2P"/>
    </source>
</evidence>
<evidence type="ECO:0007829" key="8">
    <source>
        <dbReference type="PDB" id="5I1X"/>
    </source>
</evidence>
<feature type="chain" id="PRO_0000441255" description="Beta/delta-theraphotoxin-Pre1a" evidence="1">
    <location>
        <begin position="1"/>
        <end position="35"/>
    </location>
</feature>
<feature type="site" description="Probable key residue for the interaction with Nav channels" evidence="4">
    <location>
        <position position="7"/>
    </location>
</feature>
<feature type="disulfide bond" evidence="1 5">
    <location>
        <begin position="3"/>
        <end position="18"/>
    </location>
</feature>
<feature type="disulfide bond" evidence="1 5">
    <location>
        <begin position="10"/>
        <end position="23"/>
    </location>
</feature>
<feature type="disulfide bond" evidence="1 5">
    <location>
        <begin position="17"/>
        <end position="30"/>
    </location>
</feature>
<feature type="strand" evidence="8">
    <location>
        <begin position="12"/>
        <end position="14"/>
    </location>
</feature>
<feature type="strand" evidence="8">
    <location>
        <begin position="19"/>
        <end position="24"/>
    </location>
</feature>
<feature type="turn" evidence="8">
    <location>
        <begin position="25"/>
        <end position="28"/>
    </location>
</feature>
<feature type="strand" evidence="8">
    <location>
        <begin position="29"/>
        <end position="33"/>
    </location>
</feature>
<organism>
    <name type="scientific">Psalmopoeus reduncus</name>
    <name type="common">Costa Rican orangemouth tarantula</name>
    <dbReference type="NCBI Taxonomy" id="1795668"/>
    <lineage>
        <taxon>Eukaryota</taxon>
        <taxon>Metazoa</taxon>
        <taxon>Ecdysozoa</taxon>
        <taxon>Arthropoda</taxon>
        <taxon>Chelicerata</taxon>
        <taxon>Arachnida</taxon>
        <taxon>Araneae</taxon>
        <taxon>Mygalomorphae</taxon>
        <taxon>Theraphosidae</taxon>
        <taxon>Psalmopoeus</taxon>
    </lineage>
</organism>
<sequence>EDCLGWFSRCSPKNDKCCPNYKCSSKDLWCKYKIW</sequence>
<proteinExistence type="evidence at protein level"/>
<comment type="function">
    <text evidence="1 4">Gating-modifier toxin that both inhibits the peak current of human Nav1.1/SCN1A, rat Nav1.2/SCN2A, human Nav1.6/SCN8A, and human Nav1.7/SCN9A and concurrently inhibits fast inactivation of human Nav1.1 and rat Nav1.3/SCN3A. The relative rank order potency for Nav modulation is Nav1.3 (inactivation EC(50)=45 nM) &gt; Nav1.7 &gt; Nav1.2 &gt; Nav1.1 (inactivation) &gt; Nav1.1 &gt; Nav1.6 &gt; Nav1.3 (IC(50)=8 uM). The DII and DIV S3-S4 loops of Nav channel voltage sensors are important for the interaction of this toxin with Nav channels but cannot account for its unique subtype selectivity. It is the variability of the S1-S2 loops between NaV channels which contributes substantially to the selectivity profile observed for this toxin, particularly with regards to fast inactivation. This toxin may bind the channel in the resting state (Probable).</text>
</comment>
<comment type="subcellular location">
    <subcellularLocation>
        <location evidence="1">Secreted</location>
    </subcellularLocation>
</comment>
<comment type="tissue specificity">
    <text evidence="4">Expressed by the venom gland.</text>
</comment>
<comment type="domain">
    <text evidence="5">The presence of a 'disulfide through disulfide knot' structurally defines this protein as a knottin.</text>
</comment>
<comment type="mass spectrometry">
    <text>Monoisotopic mass.</text>
</comment>
<comment type="miscellaneous">
    <text evidence="5">NMR structure determination (PDB 5I1X) is done on a mutant of 36 residues with an additional Ser at first position and an Ala residue replacing the Phe-7. Functional information is not known on this mutant.</text>
</comment>
<comment type="similarity">
    <text evidence="3">Belongs to the neurotoxin 10 (Hwtx-1) family.</text>
</comment>
<dbReference type="PDB" id="5I1X">
    <property type="method" value="NMR"/>
    <property type="chains" value="A=1-35"/>
</dbReference>
<dbReference type="PDB" id="5I2P">
    <property type="method" value="NMR"/>
    <property type="chains" value="A=1-35"/>
</dbReference>
<dbReference type="PDBsum" id="5I1X"/>
<dbReference type="PDBsum" id="5I2P"/>
<dbReference type="BMRB" id="A0A1S4NYE8"/>
<dbReference type="SMR" id="A0A1S4NYE8"/>
<dbReference type="GO" id="GO:0005576">
    <property type="term" value="C:extracellular region"/>
    <property type="evidence" value="ECO:0007669"/>
    <property type="project" value="UniProtKB-SubCell"/>
</dbReference>
<dbReference type="GO" id="GO:0008200">
    <property type="term" value="F:ion channel inhibitor activity"/>
    <property type="evidence" value="ECO:0007669"/>
    <property type="project" value="InterPro"/>
</dbReference>
<dbReference type="GO" id="GO:0017080">
    <property type="term" value="F:sodium channel regulator activity"/>
    <property type="evidence" value="ECO:0007669"/>
    <property type="project" value="UniProtKB-KW"/>
</dbReference>
<dbReference type="GO" id="GO:0090729">
    <property type="term" value="F:toxin activity"/>
    <property type="evidence" value="ECO:0007669"/>
    <property type="project" value="UniProtKB-KW"/>
</dbReference>
<dbReference type="InterPro" id="IPR011696">
    <property type="entry name" value="Huwentoxin-1"/>
</dbReference>
<dbReference type="Pfam" id="PF07740">
    <property type="entry name" value="Toxin_12"/>
    <property type="match status" value="1"/>
</dbReference>
<dbReference type="SUPFAM" id="SSF57059">
    <property type="entry name" value="omega toxin-like"/>
    <property type="match status" value="1"/>
</dbReference>